<dbReference type="EMBL" id="EU262890">
    <property type="protein sequence ID" value="ABX10078.1"/>
    <property type="molecule type" value="Genomic_DNA"/>
</dbReference>
<dbReference type="EMBL" id="EU262890">
    <property type="protein sequence ID" value="ABX10099.1"/>
    <property type="molecule type" value="Genomic_DNA"/>
</dbReference>
<dbReference type="SMR" id="B0Z585"/>
<dbReference type="GO" id="GO:0009507">
    <property type="term" value="C:chloroplast"/>
    <property type="evidence" value="ECO:0007669"/>
    <property type="project" value="UniProtKB-SubCell"/>
</dbReference>
<dbReference type="GO" id="GO:0005762">
    <property type="term" value="C:mitochondrial large ribosomal subunit"/>
    <property type="evidence" value="ECO:0007669"/>
    <property type="project" value="TreeGrafter"/>
</dbReference>
<dbReference type="GO" id="GO:0019843">
    <property type="term" value="F:rRNA binding"/>
    <property type="evidence" value="ECO:0007669"/>
    <property type="project" value="UniProtKB-UniRule"/>
</dbReference>
<dbReference type="GO" id="GO:0003735">
    <property type="term" value="F:structural constituent of ribosome"/>
    <property type="evidence" value="ECO:0007669"/>
    <property type="project" value="InterPro"/>
</dbReference>
<dbReference type="GO" id="GO:0016740">
    <property type="term" value="F:transferase activity"/>
    <property type="evidence" value="ECO:0007669"/>
    <property type="project" value="InterPro"/>
</dbReference>
<dbReference type="GO" id="GO:0032543">
    <property type="term" value="P:mitochondrial translation"/>
    <property type="evidence" value="ECO:0007669"/>
    <property type="project" value="TreeGrafter"/>
</dbReference>
<dbReference type="FunFam" id="4.10.950.10:FF:000001">
    <property type="entry name" value="50S ribosomal protein L2"/>
    <property type="match status" value="1"/>
</dbReference>
<dbReference type="FunFam" id="2.30.30.30:FF:000008">
    <property type="entry name" value="50S ribosomal protein L2, chloroplastic"/>
    <property type="match status" value="1"/>
</dbReference>
<dbReference type="FunFam" id="2.40.50.140:FF:000029">
    <property type="entry name" value="50S ribosomal protein L2, chloroplastic"/>
    <property type="match status" value="1"/>
</dbReference>
<dbReference type="Gene3D" id="2.30.30.30">
    <property type="match status" value="1"/>
</dbReference>
<dbReference type="Gene3D" id="2.40.50.140">
    <property type="entry name" value="Nucleic acid-binding proteins"/>
    <property type="match status" value="1"/>
</dbReference>
<dbReference type="Gene3D" id="4.10.950.10">
    <property type="entry name" value="Ribosomal protein L2, domain 3"/>
    <property type="match status" value="1"/>
</dbReference>
<dbReference type="HAMAP" id="MF_01320_B">
    <property type="entry name" value="Ribosomal_uL2_B"/>
    <property type="match status" value="1"/>
</dbReference>
<dbReference type="InterPro" id="IPR012340">
    <property type="entry name" value="NA-bd_OB-fold"/>
</dbReference>
<dbReference type="InterPro" id="IPR014722">
    <property type="entry name" value="Rib_uL2_dom2"/>
</dbReference>
<dbReference type="InterPro" id="IPR002171">
    <property type="entry name" value="Ribosomal_uL2"/>
</dbReference>
<dbReference type="InterPro" id="IPR005880">
    <property type="entry name" value="Ribosomal_uL2_bac/org-type"/>
</dbReference>
<dbReference type="InterPro" id="IPR022669">
    <property type="entry name" value="Ribosomal_uL2_C"/>
</dbReference>
<dbReference type="InterPro" id="IPR022671">
    <property type="entry name" value="Ribosomal_uL2_CS"/>
</dbReference>
<dbReference type="InterPro" id="IPR014726">
    <property type="entry name" value="Ribosomal_uL2_dom3"/>
</dbReference>
<dbReference type="InterPro" id="IPR022666">
    <property type="entry name" value="Ribosomal_uL2_RNA-bd_dom"/>
</dbReference>
<dbReference type="InterPro" id="IPR008991">
    <property type="entry name" value="Translation_prot_SH3-like_sf"/>
</dbReference>
<dbReference type="NCBIfam" id="TIGR01171">
    <property type="entry name" value="rplB_bact"/>
    <property type="match status" value="1"/>
</dbReference>
<dbReference type="PANTHER" id="PTHR13691:SF5">
    <property type="entry name" value="LARGE RIBOSOMAL SUBUNIT PROTEIN UL2M"/>
    <property type="match status" value="1"/>
</dbReference>
<dbReference type="PANTHER" id="PTHR13691">
    <property type="entry name" value="RIBOSOMAL PROTEIN L2"/>
    <property type="match status" value="1"/>
</dbReference>
<dbReference type="Pfam" id="PF00181">
    <property type="entry name" value="Ribosomal_L2"/>
    <property type="match status" value="1"/>
</dbReference>
<dbReference type="Pfam" id="PF03947">
    <property type="entry name" value="Ribosomal_L2_C"/>
    <property type="match status" value="1"/>
</dbReference>
<dbReference type="PIRSF" id="PIRSF002158">
    <property type="entry name" value="Ribosomal_L2"/>
    <property type="match status" value="1"/>
</dbReference>
<dbReference type="SMART" id="SM01383">
    <property type="entry name" value="Ribosomal_L2"/>
    <property type="match status" value="1"/>
</dbReference>
<dbReference type="SMART" id="SM01382">
    <property type="entry name" value="Ribosomal_L2_C"/>
    <property type="match status" value="1"/>
</dbReference>
<dbReference type="SUPFAM" id="SSF50249">
    <property type="entry name" value="Nucleic acid-binding proteins"/>
    <property type="match status" value="1"/>
</dbReference>
<dbReference type="SUPFAM" id="SSF50104">
    <property type="entry name" value="Translation proteins SH3-like domain"/>
    <property type="match status" value="1"/>
</dbReference>
<dbReference type="PROSITE" id="PS00467">
    <property type="entry name" value="RIBOSOMAL_L2"/>
    <property type="match status" value="1"/>
</dbReference>
<feature type="chain" id="PRO_0000342546" description="Large ribosomal subunit protein uL2cz/uL2cy">
    <location>
        <begin position="1"/>
        <end position="273"/>
    </location>
</feature>
<feature type="region of interest" description="Disordered" evidence="3">
    <location>
        <begin position="1"/>
        <end position="23"/>
    </location>
</feature>
<feature type="region of interest" description="Disordered" evidence="3">
    <location>
        <begin position="223"/>
        <end position="273"/>
    </location>
</feature>
<name>RK2_OENGL</name>
<protein>
    <recommendedName>
        <fullName evidence="2">Large ribosomal subunit protein uL2cz/uL2cy</fullName>
    </recommendedName>
    <alternativeName>
        <fullName evidence="4">50S ribosomal protein L2, chloroplastic</fullName>
    </alternativeName>
</protein>
<proteinExistence type="inferred from homology"/>
<evidence type="ECO:0000250" key="1"/>
<evidence type="ECO:0000255" key="2">
    <source>
        <dbReference type="HAMAP-Rule" id="MF_01320"/>
    </source>
</evidence>
<evidence type="ECO:0000256" key="3">
    <source>
        <dbReference type="SAM" id="MobiDB-lite"/>
    </source>
</evidence>
<evidence type="ECO:0000305" key="4"/>
<keyword id="KW-0150">Chloroplast</keyword>
<keyword id="KW-0934">Plastid</keyword>
<keyword id="KW-0687">Ribonucleoprotein</keyword>
<keyword id="KW-0689">Ribosomal protein</keyword>
<organism>
    <name type="scientific">Oenothera glazioviana</name>
    <name type="common">Large-flowered evening primrose</name>
    <name type="synonym">Oenothera erythrosepala</name>
    <dbReference type="NCBI Taxonomy" id="482428"/>
    <lineage>
        <taxon>Eukaryota</taxon>
        <taxon>Viridiplantae</taxon>
        <taxon>Streptophyta</taxon>
        <taxon>Embryophyta</taxon>
        <taxon>Tracheophyta</taxon>
        <taxon>Spermatophyta</taxon>
        <taxon>Magnoliopsida</taxon>
        <taxon>eudicotyledons</taxon>
        <taxon>Gunneridae</taxon>
        <taxon>Pentapetalae</taxon>
        <taxon>rosids</taxon>
        <taxon>malvids</taxon>
        <taxon>Myrtales</taxon>
        <taxon>Onagraceae</taxon>
        <taxon>Onagroideae</taxon>
        <taxon>Onagreae</taxon>
        <taxon>Oenothera</taxon>
    </lineage>
</organism>
<accession>B0Z585</accession>
<reference key="1">
    <citation type="journal article" date="2008" name="Nucleic Acids Res.">
        <title>The complete nucleotide sequences of the five genetically distinct plastid genomes of Oenothera, subsection Oenothera: I. Sequence evaluation and plastome evolution.</title>
        <authorList>
            <person name="Greiner S."/>
            <person name="Wang X."/>
            <person name="Rauwolf U."/>
            <person name="Silber M.V."/>
            <person name="Mayer K."/>
            <person name="Meurer J."/>
            <person name="Haberer G."/>
            <person name="Herrmann R.G."/>
        </authorList>
    </citation>
    <scope>NUCLEOTIDE SEQUENCE [LARGE SCALE GENOMIC DNA]</scope>
    <source>
        <strain>cv. Rr-lamarckiana Sweden</strain>
    </source>
</reference>
<comment type="subunit">
    <text evidence="1">Part of the 50S ribosomal subunit.</text>
</comment>
<comment type="subcellular location">
    <subcellularLocation>
        <location>Plastid</location>
        <location>Chloroplast</location>
    </subcellularLocation>
</comment>
<comment type="similarity">
    <text evidence="4">Belongs to the universal ribosomal protein uL2 family.</text>
</comment>
<geneLocation type="chloroplast"/>
<sequence>MAIHLYKTSTPSTRNGAVDSQVKSNTRKNLIYGQPRCSKGRNARGIITAGHRGGGHKRLYRKIDFRRNERDIYGRIVSIEYDPNRNASICLIHYGDGEKRYILHPRGAIIGDTIVSGTEVPIKMGNALPLKMPLGTALHNIEITLGKGGQLARAAGAVAKLIAKEGKSATLKLPSGEVRLISNNCSATVGQVGNVGVNQKSLGRAGSKRWLGKRPVVRGVVMNPVDHPHGGGEGRAPIGRKKPATPWGYPALGRRSRKRNKYSENLILRRRSK</sequence>
<gene>
    <name type="primary">rpl2-A</name>
</gene>
<gene>
    <name type="primary">rpl2-B</name>
</gene>